<keyword id="KW-0963">Cytoplasm</keyword>
<keyword id="KW-0251">Elongation factor</keyword>
<keyword id="KW-0648">Protein biosynthesis</keyword>
<comment type="function">
    <text evidence="1">Associates with the EF-Tu.GDP complex and induces the exchange of GDP to GTP. It remains bound to the aminoacyl-tRNA.EF-Tu.GTP complex up to the GTP hydrolysis stage on the ribosome.</text>
</comment>
<comment type="subcellular location">
    <subcellularLocation>
        <location evidence="1">Cytoplasm</location>
    </subcellularLocation>
</comment>
<comment type="similarity">
    <text evidence="1">Belongs to the EF-Ts family.</text>
</comment>
<evidence type="ECO:0000255" key="1">
    <source>
        <dbReference type="HAMAP-Rule" id="MF_00050"/>
    </source>
</evidence>
<protein>
    <recommendedName>
        <fullName evidence="1">Elongation factor Ts</fullName>
        <shortName evidence="1">EF-Ts</shortName>
    </recommendedName>
</protein>
<sequence length="306" mass="32236">MANITAALVKELREKTGAGMMDCKGALNETNGDLEAAVDWLRKKGLAKAAKKAGRVAAEGLVAVESAGRHAAVVEVNSETDFVARNDGFQAFAREAAKLALNTDGTLEGLQAATFPGSSETVQEKLSNLIATIGENMTLRRVAKLEVSKGVIASYVHGQINEGLGKIGVLVALESEGDVEFLSTLGRQIAMHVAATNPTALDASGVDQAVVERESNILREKNAGKPDHVMAKIVESGLKSYYKEVTLLEQPFVHDGSKTVSQILKEAAGKAGGEVAIKGFVRYALGEGIEKEEGPDFAAEVASMSR</sequence>
<name>EFTS_METC4</name>
<feature type="chain" id="PRO_1000117587" description="Elongation factor Ts">
    <location>
        <begin position="1"/>
        <end position="306"/>
    </location>
</feature>
<feature type="region of interest" description="Involved in Mg(2+) ion dislocation from EF-Tu" evidence="1">
    <location>
        <begin position="80"/>
        <end position="83"/>
    </location>
</feature>
<organism>
    <name type="scientific">Methylorubrum extorquens (strain CM4 / NCIMB 13688)</name>
    <name type="common">Methylobacterium extorquens</name>
    <dbReference type="NCBI Taxonomy" id="440085"/>
    <lineage>
        <taxon>Bacteria</taxon>
        <taxon>Pseudomonadati</taxon>
        <taxon>Pseudomonadota</taxon>
        <taxon>Alphaproteobacteria</taxon>
        <taxon>Hyphomicrobiales</taxon>
        <taxon>Methylobacteriaceae</taxon>
        <taxon>Methylorubrum</taxon>
    </lineage>
</organism>
<dbReference type="EMBL" id="CP001298">
    <property type="protein sequence ID" value="ACK83193.1"/>
    <property type="molecule type" value="Genomic_DNA"/>
</dbReference>
<dbReference type="RefSeq" id="WP_003598034.1">
    <property type="nucleotide sequence ID" value="NC_011757.1"/>
</dbReference>
<dbReference type="SMR" id="B7KZG1"/>
<dbReference type="GeneID" id="72989761"/>
<dbReference type="KEGG" id="mch:Mchl_2348"/>
<dbReference type="HOGENOM" id="CLU_047155_2_0_5"/>
<dbReference type="Proteomes" id="UP000002385">
    <property type="component" value="Chromosome"/>
</dbReference>
<dbReference type="GO" id="GO:0005737">
    <property type="term" value="C:cytoplasm"/>
    <property type="evidence" value="ECO:0007669"/>
    <property type="project" value="UniProtKB-SubCell"/>
</dbReference>
<dbReference type="GO" id="GO:0003746">
    <property type="term" value="F:translation elongation factor activity"/>
    <property type="evidence" value="ECO:0007669"/>
    <property type="project" value="UniProtKB-UniRule"/>
</dbReference>
<dbReference type="CDD" id="cd14275">
    <property type="entry name" value="UBA_EF-Ts"/>
    <property type="match status" value="1"/>
</dbReference>
<dbReference type="FunFam" id="1.10.8.10:FF:000001">
    <property type="entry name" value="Elongation factor Ts"/>
    <property type="match status" value="1"/>
</dbReference>
<dbReference type="Gene3D" id="1.10.286.20">
    <property type="match status" value="1"/>
</dbReference>
<dbReference type="Gene3D" id="1.10.8.10">
    <property type="entry name" value="DNA helicase RuvA subunit, C-terminal domain"/>
    <property type="match status" value="1"/>
</dbReference>
<dbReference type="Gene3D" id="3.30.479.20">
    <property type="entry name" value="Elongation factor Ts, dimerisation domain"/>
    <property type="match status" value="2"/>
</dbReference>
<dbReference type="HAMAP" id="MF_00050">
    <property type="entry name" value="EF_Ts"/>
    <property type="match status" value="1"/>
</dbReference>
<dbReference type="InterPro" id="IPR036402">
    <property type="entry name" value="EF-Ts_dimer_sf"/>
</dbReference>
<dbReference type="InterPro" id="IPR001816">
    <property type="entry name" value="Transl_elong_EFTs/EF1B"/>
</dbReference>
<dbReference type="InterPro" id="IPR014039">
    <property type="entry name" value="Transl_elong_EFTs/EF1B_dimer"/>
</dbReference>
<dbReference type="InterPro" id="IPR018101">
    <property type="entry name" value="Transl_elong_Ts_CS"/>
</dbReference>
<dbReference type="InterPro" id="IPR009060">
    <property type="entry name" value="UBA-like_sf"/>
</dbReference>
<dbReference type="NCBIfam" id="TIGR00116">
    <property type="entry name" value="tsf"/>
    <property type="match status" value="1"/>
</dbReference>
<dbReference type="PANTHER" id="PTHR11741">
    <property type="entry name" value="ELONGATION FACTOR TS"/>
    <property type="match status" value="1"/>
</dbReference>
<dbReference type="PANTHER" id="PTHR11741:SF0">
    <property type="entry name" value="ELONGATION FACTOR TS, MITOCHONDRIAL"/>
    <property type="match status" value="1"/>
</dbReference>
<dbReference type="Pfam" id="PF00889">
    <property type="entry name" value="EF_TS"/>
    <property type="match status" value="1"/>
</dbReference>
<dbReference type="SUPFAM" id="SSF54713">
    <property type="entry name" value="Elongation factor Ts (EF-Ts), dimerisation domain"/>
    <property type="match status" value="2"/>
</dbReference>
<dbReference type="SUPFAM" id="SSF46934">
    <property type="entry name" value="UBA-like"/>
    <property type="match status" value="1"/>
</dbReference>
<dbReference type="PROSITE" id="PS01127">
    <property type="entry name" value="EF_TS_2"/>
    <property type="match status" value="1"/>
</dbReference>
<proteinExistence type="inferred from homology"/>
<reference key="1">
    <citation type="submission" date="2008-12" db="EMBL/GenBank/DDBJ databases">
        <title>Complete sequence of chromosome of Methylobacterium chloromethanicum CM4.</title>
        <authorList>
            <consortium name="US DOE Joint Genome Institute"/>
            <person name="Lucas S."/>
            <person name="Copeland A."/>
            <person name="Lapidus A."/>
            <person name="Glavina del Rio T."/>
            <person name="Dalin E."/>
            <person name="Tice H."/>
            <person name="Bruce D."/>
            <person name="Goodwin L."/>
            <person name="Pitluck S."/>
            <person name="Chertkov O."/>
            <person name="Brettin T."/>
            <person name="Detter J.C."/>
            <person name="Han C."/>
            <person name="Larimer F."/>
            <person name="Land M."/>
            <person name="Hauser L."/>
            <person name="Kyrpides N."/>
            <person name="Mikhailova N."/>
            <person name="Marx C."/>
            <person name="Richardson P."/>
        </authorList>
    </citation>
    <scope>NUCLEOTIDE SEQUENCE [LARGE SCALE GENOMIC DNA]</scope>
    <source>
        <strain>CM4 / NCIMB 13688</strain>
    </source>
</reference>
<gene>
    <name evidence="1" type="primary">tsf</name>
    <name type="ordered locus">Mchl_2348</name>
</gene>
<accession>B7KZG1</accession>